<comment type="function">
    <text evidence="1">May play a role in photosystem I and II biogenesis.</text>
</comment>
<comment type="subcellular location">
    <subcellularLocation>
        <location evidence="1">Plastid</location>
        <location evidence="1">Chloroplast thylakoid membrane</location>
        <topology evidence="1">Single-pass membrane protein</topology>
    </subcellularLocation>
</comment>
<comment type="similarity">
    <text evidence="1">Belongs to the PsbN family.</text>
</comment>
<comment type="caution">
    <text evidence="1">Originally thought to be a component of PSII; based on experiments in Synechocystis, N.tabacum and barley, and its absence from PSII in T.elongatus and T.vulcanus, this is probably not true.</text>
</comment>
<name>PSBN_CITSI</name>
<geneLocation type="chloroplast"/>
<sequence>METATLVAISISGLLVSFTGYALYTAFGQPSQQLRDPFEEHGD</sequence>
<reference key="1">
    <citation type="journal article" date="2006" name="BMC Plant Biol.">
        <title>The complete chloroplast genome sequence of Citrus sinensis (L.) Osbeck var 'Ridge Pineapple': organization and phylogenetic relationships to other angiosperms.</title>
        <authorList>
            <person name="Bausher M.G."/>
            <person name="Singh N.D."/>
            <person name="Lee S.-B."/>
            <person name="Jansen R.K."/>
            <person name="Daniell H."/>
        </authorList>
    </citation>
    <scope>NUCLEOTIDE SEQUENCE [LARGE SCALE GENOMIC DNA]</scope>
    <source>
        <strain>cv. Osbeck var. Ridge Pineapple</strain>
    </source>
</reference>
<proteinExistence type="inferred from homology"/>
<feature type="chain" id="PRO_0000276265" description="Protein PsbN">
    <location>
        <begin position="1"/>
        <end position="43"/>
    </location>
</feature>
<feature type="transmembrane region" description="Helical" evidence="1">
    <location>
        <begin position="5"/>
        <end position="27"/>
    </location>
</feature>
<gene>
    <name evidence="1" type="primary">psbN</name>
</gene>
<protein>
    <recommendedName>
        <fullName evidence="1">Protein PsbN</fullName>
    </recommendedName>
</protein>
<keyword id="KW-0150">Chloroplast</keyword>
<keyword id="KW-0472">Membrane</keyword>
<keyword id="KW-0934">Plastid</keyword>
<keyword id="KW-0793">Thylakoid</keyword>
<keyword id="KW-0812">Transmembrane</keyword>
<keyword id="KW-1133">Transmembrane helix</keyword>
<dbReference type="EMBL" id="DQ864733">
    <property type="protein sequence ID" value="ABI49047.1"/>
    <property type="molecule type" value="Genomic_DNA"/>
</dbReference>
<dbReference type="RefSeq" id="YP_740504.1">
    <property type="nucleotide sequence ID" value="NC_008334.1"/>
</dbReference>
<dbReference type="SMR" id="Q09ME9"/>
<dbReference type="GeneID" id="4271127"/>
<dbReference type="KEGG" id="cit:4271127"/>
<dbReference type="OrthoDB" id="3727at71240"/>
<dbReference type="GO" id="GO:0009535">
    <property type="term" value="C:chloroplast thylakoid membrane"/>
    <property type="evidence" value="ECO:0007669"/>
    <property type="project" value="UniProtKB-SubCell"/>
</dbReference>
<dbReference type="GO" id="GO:0015979">
    <property type="term" value="P:photosynthesis"/>
    <property type="evidence" value="ECO:0007669"/>
    <property type="project" value="InterPro"/>
</dbReference>
<dbReference type="HAMAP" id="MF_00293">
    <property type="entry name" value="PSII_PsbN"/>
    <property type="match status" value="1"/>
</dbReference>
<dbReference type="InterPro" id="IPR003398">
    <property type="entry name" value="PSII_PsbN"/>
</dbReference>
<dbReference type="PANTHER" id="PTHR35326">
    <property type="entry name" value="PROTEIN PSBN"/>
    <property type="match status" value="1"/>
</dbReference>
<dbReference type="PANTHER" id="PTHR35326:SF3">
    <property type="entry name" value="PROTEIN PSBN"/>
    <property type="match status" value="1"/>
</dbReference>
<dbReference type="Pfam" id="PF02468">
    <property type="entry name" value="PsbN"/>
    <property type="match status" value="1"/>
</dbReference>
<organism>
    <name type="scientific">Citrus sinensis</name>
    <name type="common">Sweet orange</name>
    <name type="synonym">Citrus aurantium var. sinensis</name>
    <dbReference type="NCBI Taxonomy" id="2711"/>
    <lineage>
        <taxon>Eukaryota</taxon>
        <taxon>Viridiplantae</taxon>
        <taxon>Streptophyta</taxon>
        <taxon>Embryophyta</taxon>
        <taxon>Tracheophyta</taxon>
        <taxon>Spermatophyta</taxon>
        <taxon>Magnoliopsida</taxon>
        <taxon>eudicotyledons</taxon>
        <taxon>Gunneridae</taxon>
        <taxon>Pentapetalae</taxon>
        <taxon>rosids</taxon>
        <taxon>malvids</taxon>
        <taxon>Sapindales</taxon>
        <taxon>Rutaceae</taxon>
        <taxon>Aurantioideae</taxon>
        <taxon>Citrus</taxon>
    </lineage>
</organism>
<evidence type="ECO:0000255" key="1">
    <source>
        <dbReference type="HAMAP-Rule" id="MF_00293"/>
    </source>
</evidence>
<accession>Q09ME9</accession>